<organism>
    <name type="scientific">Saccharomyces cerevisiae (strain ATCC 204508 / S288c)</name>
    <name type="common">Baker's yeast</name>
    <dbReference type="NCBI Taxonomy" id="559292"/>
    <lineage>
        <taxon>Eukaryota</taxon>
        <taxon>Fungi</taxon>
        <taxon>Dikarya</taxon>
        <taxon>Ascomycota</taxon>
        <taxon>Saccharomycotina</taxon>
        <taxon>Saccharomycetes</taxon>
        <taxon>Saccharomycetales</taxon>
        <taxon>Saccharomycetaceae</taxon>
        <taxon>Saccharomyces</taxon>
    </lineage>
</organism>
<proteinExistence type="evidence at protein level"/>
<dbReference type="EC" id="2.4.1.-"/>
<dbReference type="EMBL" id="U43922">
    <property type="protein sequence ID" value="AAC49761.1"/>
    <property type="molecule type" value="Genomic_DNA"/>
</dbReference>
<dbReference type="EMBL" id="U39205">
    <property type="protein sequence ID" value="AAB68312.1"/>
    <property type="molecule type" value="Genomic_DNA"/>
</dbReference>
<dbReference type="EMBL" id="BK006949">
    <property type="protein sequence ID" value="DAA11377.1"/>
    <property type="molecule type" value="Genomic_DNA"/>
</dbReference>
<dbReference type="PIR" id="S61089">
    <property type="entry name" value="S61089"/>
</dbReference>
<dbReference type="RefSeq" id="NP_015272.1">
    <property type="nucleotide sequence ID" value="NM_001183867.1"/>
</dbReference>
<dbReference type="SMR" id="P54070"/>
<dbReference type="BioGRID" id="36127">
    <property type="interactions" value="75"/>
</dbReference>
<dbReference type="DIP" id="DIP-5329N"/>
<dbReference type="FunCoup" id="P54070">
    <property type="interactions" value="142"/>
</dbReference>
<dbReference type="IntAct" id="P54070">
    <property type="interactions" value="4"/>
</dbReference>
<dbReference type="STRING" id="4932.YPL053C"/>
<dbReference type="CAZy" id="GT15">
    <property type="family name" value="Glycosyltransferase Family 15"/>
</dbReference>
<dbReference type="GlyCosmos" id="P54070">
    <property type="glycosylation" value="2 sites, No reported glycans"/>
</dbReference>
<dbReference type="GlyGen" id="P54070">
    <property type="glycosylation" value="2 sites"/>
</dbReference>
<dbReference type="PaxDb" id="4932-YPL053C"/>
<dbReference type="PeptideAtlas" id="P54070"/>
<dbReference type="EnsemblFungi" id="YPL053C_mRNA">
    <property type="protein sequence ID" value="YPL053C"/>
    <property type="gene ID" value="YPL053C"/>
</dbReference>
<dbReference type="GeneID" id="856054"/>
<dbReference type="KEGG" id="sce:YPL053C"/>
<dbReference type="AGR" id="SGD:S000005974"/>
<dbReference type="SGD" id="S000005974">
    <property type="gene designation" value="KTR6"/>
</dbReference>
<dbReference type="VEuPathDB" id="FungiDB:YPL053C"/>
<dbReference type="eggNOG" id="KOG4472">
    <property type="taxonomic scope" value="Eukaryota"/>
</dbReference>
<dbReference type="GeneTree" id="ENSGT00940000176287"/>
<dbReference type="HOGENOM" id="CLU_024327_1_0_1"/>
<dbReference type="InParanoid" id="P54070"/>
<dbReference type="OMA" id="NCNCDQG"/>
<dbReference type="OrthoDB" id="2425226at2759"/>
<dbReference type="BioCyc" id="MetaCyc:YPL053C-MONOMER"/>
<dbReference type="BioCyc" id="YEAST:YPL053C-MONOMER"/>
<dbReference type="UniPathway" id="UPA00378"/>
<dbReference type="BioGRID-ORCS" id="856054">
    <property type="hits" value="4 hits in 10 CRISPR screens"/>
</dbReference>
<dbReference type="PRO" id="PR:P54070"/>
<dbReference type="Proteomes" id="UP000002311">
    <property type="component" value="Chromosome XVI"/>
</dbReference>
<dbReference type="RNAct" id="P54070">
    <property type="molecule type" value="protein"/>
</dbReference>
<dbReference type="GO" id="GO:0005783">
    <property type="term" value="C:endoplasmic reticulum"/>
    <property type="evidence" value="ECO:0000314"/>
    <property type="project" value="SGD"/>
</dbReference>
<dbReference type="GO" id="GO:0000324">
    <property type="term" value="C:fungal-type vacuole"/>
    <property type="evidence" value="ECO:0007005"/>
    <property type="project" value="SGD"/>
</dbReference>
<dbReference type="GO" id="GO:0005794">
    <property type="term" value="C:Golgi apparatus"/>
    <property type="evidence" value="ECO:0000318"/>
    <property type="project" value="GO_Central"/>
</dbReference>
<dbReference type="GO" id="GO:0016020">
    <property type="term" value="C:membrane"/>
    <property type="evidence" value="ECO:0000314"/>
    <property type="project" value="SGD"/>
</dbReference>
<dbReference type="GO" id="GO:0000026">
    <property type="term" value="F:alpha-1,2-mannosyltransferase activity"/>
    <property type="evidence" value="ECO:0000318"/>
    <property type="project" value="GO_Central"/>
</dbReference>
<dbReference type="GO" id="GO:0000031">
    <property type="term" value="F:mannosylphosphate transferase activity"/>
    <property type="evidence" value="ECO:0000315"/>
    <property type="project" value="SGD"/>
</dbReference>
<dbReference type="GO" id="GO:0000032">
    <property type="term" value="P:cell wall mannoprotein biosynthetic process"/>
    <property type="evidence" value="ECO:0000318"/>
    <property type="project" value="GO_Central"/>
</dbReference>
<dbReference type="GO" id="GO:0006888">
    <property type="term" value="P:endoplasmic reticulum to Golgi vesicle-mediated transport"/>
    <property type="evidence" value="ECO:0000315"/>
    <property type="project" value="SGD"/>
</dbReference>
<dbReference type="GO" id="GO:0031505">
    <property type="term" value="P:fungal-type cell wall organization"/>
    <property type="evidence" value="ECO:0000315"/>
    <property type="project" value="SGD"/>
</dbReference>
<dbReference type="GO" id="GO:0006487">
    <property type="term" value="P:protein N-linked glycosylation"/>
    <property type="evidence" value="ECO:0000315"/>
    <property type="project" value="SGD"/>
</dbReference>
<dbReference type="GO" id="GO:0006493">
    <property type="term" value="P:protein O-linked glycosylation"/>
    <property type="evidence" value="ECO:0000318"/>
    <property type="project" value="GO_Central"/>
</dbReference>
<dbReference type="FunFam" id="3.90.550.10:FF:000051">
    <property type="entry name" value="Alpha-1,2-mannosyltransferase (Ktr4)"/>
    <property type="match status" value="1"/>
</dbReference>
<dbReference type="Gene3D" id="3.90.550.10">
    <property type="entry name" value="Spore Coat Polysaccharide Biosynthesis Protein SpsA, Chain A"/>
    <property type="match status" value="1"/>
</dbReference>
<dbReference type="InterPro" id="IPR002685">
    <property type="entry name" value="Glyco_trans_15"/>
</dbReference>
<dbReference type="InterPro" id="IPR029044">
    <property type="entry name" value="Nucleotide-diphossugar_trans"/>
</dbReference>
<dbReference type="PANTHER" id="PTHR31121">
    <property type="entry name" value="ALPHA-1,2 MANNOSYLTRANSFERASE KTR1"/>
    <property type="match status" value="1"/>
</dbReference>
<dbReference type="PANTHER" id="PTHR31121:SF8">
    <property type="entry name" value="GLYCOLIPID 2-ALPHA-MANNOSYLTRANSFERASE-RELATED"/>
    <property type="match status" value="1"/>
</dbReference>
<dbReference type="Pfam" id="PF01793">
    <property type="entry name" value="Glyco_transf_15"/>
    <property type="match status" value="1"/>
</dbReference>
<dbReference type="PIRSF" id="PIRSF018153">
    <property type="entry name" value="Glyco_trans_15"/>
    <property type="match status" value="1"/>
</dbReference>
<dbReference type="SUPFAM" id="SSF53448">
    <property type="entry name" value="Nucleotide-diphospho-sugar transferases"/>
    <property type="match status" value="1"/>
</dbReference>
<keyword id="KW-0325">Glycoprotein</keyword>
<keyword id="KW-0328">Glycosyltransferase</keyword>
<keyword id="KW-0472">Membrane</keyword>
<keyword id="KW-1185">Reference proteome</keyword>
<keyword id="KW-0735">Signal-anchor</keyword>
<keyword id="KW-0808">Transferase</keyword>
<keyword id="KW-0812">Transmembrane</keyword>
<keyword id="KW-1133">Transmembrane helix</keyword>
<sequence length="446" mass="52128">MHVLLSKKIARFLLISFVFVLALMVTINHPKTKQMSEQYVTPYLPKSLQPIAKISAEEQRRIQSEQEEAELKQSLEGEAIRNATVNAIKEKIKSYGGNETTLGFMVPSYINHRGSPPKACFVSLITERDSMTQILQSIDEVQVKFNKNFAYPWVFISQGELDGMKQEMIRQAITDSMNGDPELINIKFAEIPADEWVYPEWIDENKAAESLISLANVPDGDSRAVRYQARYFAGFFWRHPVLDEFDWYWRVDPGIKLYCDIDHDLFRWMQDEGKVFGFTLSMSEAKEANEKIWDVTKKFAKDFPKFISENNFKSFITKKDSEDFNNCEFTSNFEIGNLNFYRSPAYRKFFNYIDEEGGIFYWKWSDSIIHTIGLSMLLPKDKIHFFENIGFHYDKYNNCPLNDDIWNQYNCNCDQGNDFTFRSGSCGGHYFDIMKKDKPEGWDRLP</sequence>
<reference key="1">
    <citation type="journal article" date="1997" name="J. Biol. Chem.">
        <title>MNN6, a member of the KRE2/MNT1 family, is the gene for mannosylphosphate transfer in Saccharomyces cerevisiae.</title>
        <authorList>
            <person name="Wang X.-H."/>
            <person name="Nakayama K."/>
            <person name="Shimma Y."/>
            <person name="Tanaka A."/>
            <person name="Jigami Y."/>
        </authorList>
    </citation>
    <scope>NUCLEOTIDE SEQUENCE [GENOMIC DNA]</scope>
    <scope>CHARACTERIZATION</scope>
    <source>
        <strain>S288c / GRF88</strain>
    </source>
</reference>
<reference key="2">
    <citation type="journal article" date="1997" name="Nature">
        <title>The nucleotide sequence of Saccharomyces cerevisiae chromosome XVI.</title>
        <authorList>
            <person name="Bussey H."/>
            <person name="Storms R.K."/>
            <person name="Ahmed A."/>
            <person name="Albermann K."/>
            <person name="Allen E."/>
            <person name="Ansorge W."/>
            <person name="Araujo R."/>
            <person name="Aparicio A."/>
            <person name="Barrell B.G."/>
            <person name="Badcock K."/>
            <person name="Benes V."/>
            <person name="Botstein D."/>
            <person name="Bowman S."/>
            <person name="Brueckner M."/>
            <person name="Carpenter J."/>
            <person name="Cherry J.M."/>
            <person name="Chung E."/>
            <person name="Churcher C.M."/>
            <person name="Coster F."/>
            <person name="Davis K."/>
            <person name="Davis R.W."/>
            <person name="Dietrich F.S."/>
            <person name="Delius H."/>
            <person name="DiPaolo T."/>
            <person name="Dubois E."/>
            <person name="Duesterhoeft A."/>
            <person name="Duncan M."/>
            <person name="Floeth M."/>
            <person name="Fortin N."/>
            <person name="Friesen J.D."/>
            <person name="Fritz C."/>
            <person name="Goffeau A."/>
            <person name="Hall J."/>
            <person name="Hebling U."/>
            <person name="Heumann K."/>
            <person name="Hilbert H."/>
            <person name="Hillier L.W."/>
            <person name="Hunicke-Smith S."/>
            <person name="Hyman R.W."/>
            <person name="Johnston M."/>
            <person name="Kalman S."/>
            <person name="Kleine K."/>
            <person name="Komp C."/>
            <person name="Kurdi O."/>
            <person name="Lashkari D."/>
            <person name="Lew H."/>
            <person name="Lin A."/>
            <person name="Lin D."/>
            <person name="Louis E.J."/>
            <person name="Marathe R."/>
            <person name="Messenguy F."/>
            <person name="Mewes H.-W."/>
            <person name="Mirtipati S."/>
            <person name="Moestl D."/>
            <person name="Mueller-Auer S."/>
            <person name="Namath A."/>
            <person name="Nentwich U."/>
            <person name="Oefner P."/>
            <person name="Pearson D."/>
            <person name="Petel F.X."/>
            <person name="Pohl T.M."/>
            <person name="Purnelle B."/>
            <person name="Rajandream M.A."/>
            <person name="Rechmann S."/>
            <person name="Rieger M."/>
            <person name="Riles L."/>
            <person name="Roberts D."/>
            <person name="Schaefer M."/>
            <person name="Scharfe M."/>
            <person name="Scherens B."/>
            <person name="Schramm S."/>
            <person name="Schroeder M."/>
            <person name="Sdicu A.-M."/>
            <person name="Tettelin H."/>
            <person name="Urrestarazu L.A."/>
            <person name="Ushinsky S."/>
            <person name="Vierendeels F."/>
            <person name="Vissers S."/>
            <person name="Voss H."/>
            <person name="Walsh S.V."/>
            <person name="Wambutt R."/>
            <person name="Wang Y."/>
            <person name="Wedler E."/>
            <person name="Wedler H."/>
            <person name="Winnett E."/>
            <person name="Zhong W.-W."/>
            <person name="Zollner A."/>
            <person name="Vo D.H."/>
            <person name="Hani J."/>
        </authorList>
    </citation>
    <scope>NUCLEOTIDE SEQUENCE [LARGE SCALE GENOMIC DNA]</scope>
    <source>
        <strain>ATCC 204508 / S288c</strain>
    </source>
</reference>
<reference key="3">
    <citation type="journal article" date="2014" name="G3 (Bethesda)">
        <title>The reference genome sequence of Saccharomyces cerevisiae: Then and now.</title>
        <authorList>
            <person name="Engel S.R."/>
            <person name="Dietrich F.S."/>
            <person name="Fisk D.G."/>
            <person name="Binkley G."/>
            <person name="Balakrishnan R."/>
            <person name="Costanzo M.C."/>
            <person name="Dwight S.S."/>
            <person name="Hitz B.C."/>
            <person name="Karra K."/>
            <person name="Nash R.S."/>
            <person name="Weng S."/>
            <person name="Wong E.D."/>
            <person name="Lloyd P."/>
            <person name="Skrzypek M.S."/>
            <person name="Miyasato S.R."/>
            <person name="Simison M."/>
            <person name="Cherry J.M."/>
        </authorList>
    </citation>
    <scope>GENOME REANNOTATION</scope>
    <source>
        <strain>ATCC 204508 / S288c</strain>
    </source>
</reference>
<reference key="4">
    <citation type="journal article" date="1997" name="Yeast">
        <title>Completion of the Saccharomyces cerevisiae genome sequence allows identification of KTR5, KTR6 and KTR7 and definition of the nine-membered KRE2/MNT1 mannosyltransferase gene family in this organism.</title>
        <authorList>
            <person name="Lussier M."/>
            <person name="Sdicu A.-M."/>
            <person name="Winnett E."/>
            <person name="Vo D.H."/>
            <person name="Sheraton J."/>
            <person name="Duesterhoeft A."/>
            <person name="Storms R.K."/>
            <person name="Bussey H."/>
        </authorList>
    </citation>
    <scope>CHARACTERIZATION</scope>
</reference>
<reference key="5">
    <citation type="journal article" date="2003" name="Nature">
        <title>Global analysis of protein expression in yeast.</title>
        <authorList>
            <person name="Ghaemmaghami S."/>
            <person name="Huh W.-K."/>
            <person name="Bower K."/>
            <person name="Howson R.W."/>
            <person name="Belle A."/>
            <person name="Dephoure N."/>
            <person name="O'Shea E.K."/>
            <person name="Weissman J.S."/>
        </authorList>
    </citation>
    <scope>LEVEL OF PROTEIN EXPRESSION [LARGE SCALE ANALYSIS]</scope>
</reference>
<feature type="chain" id="PRO_0000208247" description="Mannosyltransferase KTR6">
    <location>
        <begin position="1"/>
        <end position="446"/>
    </location>
</feature>
<feature type="topological domain" description="Cytoplasmic" evidence="2">
    <location>
        <begin position="1"/>
        <end position="8"/>
    </location>
</feature>
<feature type="transmembrane region" description="Helical; Signal-anchor for type II membrane protein" evidence="2">
    <location>
        <begin position="9"/>
        <end position="29"/>
    </location>
</feature>
<feature type="topological domain" description="Lumenal" evidence="2">
    <location>
        <begin position="30"/>
        <end position="446"/>
    </location>
</feature>
<feature type="region of interest" description="Stem region" evidence="1">
    <location>
        <begin position="30"/>
        <end position="114"/>
    </location>
</feature>
<feature type="region of interest" description="Catalytic" evidence="1">
    <location>
        <begin position="115"/>
        <end position="446"/>
    </location>
</feature>
<feature type="active site" description="Nucleophile" evidence="2">
    <location>
        <position position="334"/>
    </location>
</feature>
<feature type="glycosylation site" description="N-linked (GlcNAc...) asparagine" evidence="2">
    <location>
        <position position="82"/>
    </location>
</feature>
<feature type="glycosylation site" description="N-linked (GlcNAc...) asparagine" evidence="2">
    <location>
        <position position="98"/>
    </location>
</feature>
<accession>P54070</accession>
<accession>D6W3W1</accession>
<protein>
    <recommendedName>
        <fullName>Mannosyltransferase KTR6</fullName>
        <ecNumber>2.4.1.-</ecNumber>
    </recommendedName>
    <alternativeName>
        <fullName>Mannosylphosphate transferase MNN6</fullName>
    </alternativeName>
</protein>
<evidence type="ECO:0000250" key="1"/>
<evidence type="ECO:0000255" key="2"/>
<evidence type="ECO:0000269" key="3">
    <source>
    </source>
</evidence>
<evidence type="ECO:0000305" key="4"/>
<gene>
    <name type="primary">KTR6</name>
    <name type="synonym">MNN6</name>
    <name type="ordered locus">YPL053C</name>
    <name type="ORF">LPE19C</name>
</gene>
<name>KTR6_YEAST</name>
<comment type="function">
    <text>Glycosyltransferase that transfers an alpha-D-mannosyl residue from GDP-mannose into lipid-linked oligosaccharide, forming an alpha-(1-&gt;2)-D-mannosyl-D-mannose linkage. Required for addition of mannosylphosphate in yeast mannan. Recognizes any oligosaccharides with at least one alpha-1,2-linked mannobiose unit.</text>
</comment>
<comment type="pathway">
    <text>Protein modification; protein glycosylation.</text>
</comment>
<comment type="subcellular location">
    <subcellularLocation>
        <location evidence="4">Membrane</location>
        <topology evidence="4">Single-pass type II membrane protein</topology>
    </subcellularLocation>
</comment>
<comment type="miscellaneous">
    <text evidence="3">Present with 4380 molecules/cell in log phase SD medium.</text>
</comment>
<comment type="similarity">
    <text evidence="4">Belongs to the glycosyltransferase 15 family.</text>
</comment>